<comment type="function">
    <text evidence="1">DNA-dependent RNA polymerase catalyzes the transcription of DNA into RNA using the four ribonucleoside triphosphates as substrates.</text>
</comment>
<comment type="catalytic activity">
    <reaction evidence="1">
        <text>RNA(n) + a ribonucleoside 5'-triphosphate = RNA(n+1) + diphosphate</text>
        <dbReference type="Rhea" id="RHEA:21248"/>
        <dbReference type="Rhea" id="RHEA-COMP:14527"/>
        <dbReference type="Rhea" id="RHEA-COMP:17342"/>
        <dbReference type="ChEBI" id="CHEBI:33019"/>
        <dbReference type="ChEBI" id="CHEBI:61557"/>
        <dbReference type="ChEBI" id="CHEBI:140395"/>
        <dbReference type="EC" id="2.7.7.6"/>
    </reaction>
</comment>
<comment type="subunit">
    <text evidence="1">Homodimer. The RNAP catalytic core consists of 2 alpha, 1 beta, 1 beta' and 1 omega subunit. When a sigma factor is associated with the core the holoenzyme is formed, which can initiate transcription.</text>
</comment>
<comment type="domain">
    <text evidence="1">The N-terminal domain is essential for RNAP assembly and basal transcription, whereas the C-terminal domain is involved in interaction with transcriptional regulators and with upstream promoter elements.</text>
</comment>
<comment type="similarity">
    <text evidence="1">Belongs to the RNA polymerase alpha chain family.</text>
</comment>
<sequence>MQSATEFLKPRIVEVDRASPLHAKVIMEPFERGYGHTLGNALRRILLSSMVGYAPTEVAISGVVHEYSTIEGVQEDVVDILLNLKGIAFKMHGKAEAILKVSKSGEGVVTAGDIEVGHDIEVLNPDHVIAHLTKGGKLDMEIKIEAGRGYQPATARKVSEETRAVGSILVDASFSPVRRVAYAVESARVEQRTDLDRLVIDIETNGVVEPEEAVRTAARILVSQLSVFADLEGTPAESESPRSPQVDPLLLRPVDDLELTVRSANCLKAENIYFIGDLIQRSETELLRTPNLGRKSLNEIKDVLASKGLSLGMKLENWPPAGLERP</sequence>
<organism>
    <name type="scientific">Thiobacillus denitrificans (strain ATCC 25259 / T1)</name>
    <dbReference type="NCBI Taxonomy" id="292415"/>
    <lineage>
        <taxon>Bacteria</taxon>
        <taxon>Pseudomonadati</taxon>
        <taxon>Pseudomonadota</taxon>
        <taxon>Betaproteobacteria</taxon>
        <taxon>Nitrosomonadales</taxon>
        <taxon>Thiobacillaceae</taxon>
        <taxon>Thiobacillus</taxon>
    </lineage>
</organism>
<name>RPOA_THIDA</name>
<dbReference type="EC" id="2.7.7.6" evidence="1"/>
<dbReference type="EMBL" id="CP000116">
    <property type="protein sequence ID" value="AAZ96383.1"/>
    <property type="molecule type" value="Genomic_DNA"/>
</dbReference>
<dbReference type="RefSeq" id="WP_011310942.1">
    <property type="nucleotide sequence ID" value="NC_007404.1"/>
</dbReference>
<dbReference type="SMR" id="Q3SLM4"/>
<dbReference type="STRING" id="292415.Tbd_0430"/>
<dbReference type="KEGG" id="tbd:Tbd_0430"/>
<dbReference type="eggNOG" id="COG0202">
    <property type="taxonomic scope" value="Bacteria"/>
</dbReference>
<dbReference type="HOGENOM" id="CLU_053084_0_1_4"/>
<dbReference type="OrthoDB" id="9805706at2"/>
<dbReference type="Proteomes" id="UP000008291">
    <property type="component" value="Chromosome"/>
</dbReference>
<dbReference type="GO" id="GO:0005737">
    <property type="term" value="C:cytoplasm"/>
    <property type="evidence" value="ECO:0007669"/>
    <property type="project" value="UniProtKB-ARBA"/>
</dbReference>
<dbReference type="GO" id="GO:0000428">
    <property type="term" value="C:DNA-directed RNA polymerase complex"/>
    <property type="evidence" value="ECO:0007669"/>
    <property type="project" value="UniProtKB-KW"/>
</dbReference>
<dbReference type="GO" id="GO:0003677">
    <property type="term" value="F:DNA binding"/>
    <property type="evidence" value="ECO:0007669"/>
    <property type="project" value="UniProtKB-UniRule"/>
</dbReference>
<dbReference type="GO" id="GO:0003899">
    <property type="term" value="F:DNA-directed RNA polymerase activity"/>
    <property type="evidence" value="ECO:0007669"/>
    <property type="project" value="UniProtKB-UniRule"/>
</dbReference>
<dbReference type="GO" id="GO:0046983">
    <property type="term" value="F:protein dimerization activity"/>
    <property type="evidence" value="ECO:0007669"/>
    <property type="project" value="InterPro"/>
</dbReference>
<dbReference type="GO" id="GO:0006351">
    <property type="term" value="P:DNA-templated transcription"/>
    <property type="evidence" value="ECO:0007669"/>
    <property type="project" value="UniProtKB-UniRule"/>
</dbReference>
<dbReference type="CDD" id="cd06928">
    <property type="entry name" value="RNAP_alpha_NTD"/>
    <property type="match status" value="1"/>
</dbReference>
<dbReference type="FunFam" id="1.10.150.20:FF:000001">
    <property type="entry name" value="DNA-directed RNA polymerase subunit alpha"/>
    <property type="match status" value="1"/>
</dbReference>
<dbReference type="FunFam" id="2.170.120.12:FF:000001">
    <property type="entry name" value="DNA-directed RNA polymerase subunit alpha"/>
    <property type="match status" value="1"/>
</dbReference>
<dbReference type="Gene3D" id="1.10.150.20">
    <property type="entry name" value="5' to 3' exonuclease, C-terminal subdomain"/>
    <property type="match status" value="1"/>
</dbReference>
<dbReference type="Gene3D" id="2.170.120.12">
    <property type="entry name" value="DNA-directed RNA polymerase, insert domain"/>
    <property type="match status" value="1"/>
</dbReference>
<dbReference type="Gene3D" id="3.30.1360.10">
    <property type="entry name" value="RNA polymerase, RBP11-like subunit"/>
    <property type="match status" value="1"/>
</dbReference>
<dbReference type="HAMAP" id="MF_00059">
    <property type="entry name" value="RNApol_bact_RpoA"/>
    <property type="match status" value="1"/>
</dbReference>
<dbReference type="InterPro" id="IPR011262">
    <property type="entry name" value="DNA-dir_RNA_pol_insert"/>
</dbReference>
<dbReference type="InterPro" id="IPR011263">
    <property type="entry name" value="DNA-dir_RNA_pol_RpoA/D/Rpb3"/>
</dbReference>
<dbReference type="InterPro" id="IPR011773">
    <property type="entry name" value="DNA-dir_RpoA"/>
</dbReference>
<dbReference type="InterPro" id="IPR036603">
    <property type="entry name" value="RBP11-like"/>
</dbReference>
<dbReference type="InterPro" id="IPR011260">
    <property type="entry name" value="RNAP_asu_C"/>
</dbReference>
<dbReference type="InterPro" id="IPR036643">
    <property type="entry name" value="RNApol_insert_sf"/>
</dbReference>
<dbReference type="NCBIfam" id="NF003513">
    <property type="entry name" value="PRK05182.1-2"/>
    <property type="match status" value="1"/>
</dbReference>
<dbReference type="NCBIfam" id="NF003519">
    <property type="entry name" value="PRK05182.2-5"/>
    <property type="match status" value="1"/>
</dbReference>
<dbReference type="NCBIfam" id="TIGR02027">
    <property type="entry name" value="rpoA"/>
    <property type="match status" value="1"/>
</dbReference>
<dbReference type="Pfam" id="PF01000">
    <property type="entry name" value="RNA_pol_A_bac"/>
    <property type="match status" value="1"/>
</dbReference>
<dbReference type="Pfam" id="PF03118">
    <property type="entry name" value="RNA_pol_A_CTD"/>
    <property type="match status" value="1"/>
</dbReference>
<dbReference type="Pfam" id="PF01193">
    <property type="entry name" value="RNA_pol_L"/>
    <property type="match status" value="1"/>
</dbReference>
<dbReference type="SMART" id="SM00662">
    <property type="entry name" value="RPOLD"/>
    <property type="match status" value="1"/>
</dbReference>
<dbReference type="SUPFAM" id="SSF47789">
    <property type="entry name" value="C-terminal domain of RNA polymerase alpha subunit"/>
    <property type="match status" value="1"/>
</dbReference>
<dbReference type="SUPFAM" id="SSF56553">
    <property type="entry name" value="Insert subdomain of RNA polymerase alpha subunit"/>
    <property type="match status" value="1"/>
</dbReference>
<dbReference type="SUPFAM" id="SSF55257">
    <property type="entry name" value="RBP11-like subunits of RNA polymerase"/>
    <property type="match status" value="1"/>
</dbReference>
<reference key="1">
    <citation type="journal article" date="2006" name="J. Bacteriol.">
        <title>The genome sequence of the obligately chemolithoautotrophic, facultatively anaerobic bacterium Thiobacillus denitrificans.</title>
        <authorList>
            <person name="Beller H.R."/>
            <person name="Chain P.S."/>
            <person name="Letain T.E."/>
            <person name="Chakicherla A."/>
            <person name="Larimer F.W."/>
            <person name="Richardson P.M."/>
            <person name="Coleman M.A."/>
            <person name="Wood A.P."/>
            <person name="Kelly D.P."/>
        </authorList>
    </citation>
    <scope>NUCLEOTIDE SEQUENCE [LARGE SCALE GENOMIC DNA]</scope>
    <source>
        <strain>ATCC 25259 / T1</strain>
    </source>
</reference>
<feature type="chain" id="PRO_0000225310" description="DNA-directed RNA polymerase subunit alpha">
    <location>
        <begin position="1"/>
        <end position="326"/>
    </location>
</feature>
<feature type="region of interest" description="Alpha N-terminal domain (alpha-NTD)" evidence="1">
    <location>
        <begin position="1"/>
        <end position="232"/>
    </location>
</feature>
<feature type="region of interest" description="Alpha C-terminal domain (alpha-CTD)" evidence="1">
    <location>
        <begin position="246"/>
        <end position="326"/>
    </location>
</feature>
<proteinExistence type="inferred from homology"/>
<evidence type="ECO:0000255" key="1">
    <source>
        <dbReference type="HAMAP-Rule" id="MF_00059"/>
    </source>
</evidence>
<gene>
    <name evidence="1" type="primary">rpoA</name>
    <name type="ordered locus">Tbd_0430</name>
</gene>
<accession>Q3SLM4</accession>
<keyword id="KW-0240">DNA-directed RNA polymerase</keyword>
<keyword id="KW-0548">Nucleotidyltransferase</keyword>
<keyword id="KW-1185">Reference proteome</keyword>
<keyword id="KW-0804">Transcription</keyword>
<keyword id="KW-0808">Transferase</keyword>
<protein>
    <recommendedName>
        <fullName evidence="1">DNA-directed RNA polymerase subunit alpha</fullName>
        <shortName evidence="1">RNAP subunit alpha</shortName>
        <ecNumber evidence="1">2.7.7.6</ecNumber>
    </recommendedName>
    <alternativeName>
        <fullName evidence="1">RNA polymerase subunit alpha</fullName>
    </alternativeName>
    <alternativeName>
        <fullName evidence="1">Transcriptase subunit alpha</fullName>
    </alternativeName>
</protein>